<accession>A5E240</accession>
<keyword id="KW-0256">Endoplasmic reticulum</keyword>
<keyword id="KW-0342">GTP-binding</keyword>
<keyword id="KW-0378">Hydrolase</keyword>
<keyword id="KW-0472">Membrane</keyword>
<keyword id="KW-0547">Nucleotide-binding</keyword>
<keyword id="KW-1185">Reference proteome</keyword>
<keyword id="KW-0812">Transmembrane</keyword>
<keyword id="KW-1133">Transmembrane helix</keyword>
<dbReference type="EC" id="3.6.5.-" evidence="1"/>
<dbReference type="EMBL" id="CH981527">
    <property type="protein sequence ID" value="EDK45498.1"/>
    <property type="molecule type" value="Genomic_DNA"/>
</dbReference>
<dbReference type="RefSeq" id="XP_001525749.1">
    <property type="nucleotide sequence ID" value="XM_001525699.1"/>
</dbReference>
<dbReference type="SMR" id="A5E240"/>
<dbReference type="FunCoup" id="A5E240">
    <property type="interactions" value="57"/>
</dbReference>
<dbReference type="STRING" id="379508.A5E240"/>
<dbReference type="GeneID" id="5232322"/>
<dbReference type="KEGG" id="lel:PVL30_003154"/>
<dbReference type="VEuPathDB" id="FungiDB:LELG_03677"/>
<dbReference type="eggNOG" id="KOG2203">
    <property type="taxonomic scope" value="Eukaryota"/>
</dbReference>
<dbReference type="HOGENOM" id="CLU_011270_0_0_1"/>
<dbReference type="InParanoid" id="A5E240"/>
<dbReference type="OMA" id="PIIKMTE"/>
<dbReference type="OrthoDB" id="1597724at2759"/>
<dbReference type="Proteomes" id="UP000001996">
    <property type="component" value="Unassembled WGS sequence"/>
</dbReference>
<dbReference type="GO" id="GO:0032541">
    <property type="term" value="C:cortical endoplasmic reticulum"/>
    <property type="evidence" value="ECO:0007669"/>
    <property type="project" value="EnsemblFungi"/>
</dbReference>
<dbReference type="GO" id="GO:0005789">
    <property type="term" value="C:endoplasmic reticulum membrane"/>
    <property type="evidence" value="ECO:0007669"/>
    <property type="project" value="UniProtKB-SubCell"/>
</dbReference>
<dbReference type="GO" id="GO:0005525">
    <property type="term" value="F:GTP binding"/>
    <property type="evidence" value="ECO:0007669"/>
    <property type="project" value="UniProtKB-UniRule"/>
</dbReference>
<dbReference type="GO" id="GO:0003924">
    <property type="term" value="F:GTPase activity"/>
    <property type="evidence" value="ECO:0007669"/>
    <property type="project" value="UniProtKB-UniRule"/>
</dbReference>
<dbReference type="GO" id="GO:0048309">
    <property type="term" value="P:endoplasmic reticulum inheritance"/>
    <property type="evidence" value="ECO:0007669"/>
    <property type="project" value="EnsemblFungi"/>
</dbReference>
<dbReference type="GO" id="GO:0016320">
    <property type="term" value="P:endoplasmic reticulum membrane fusion"/>
    <property type="evidence" value="ECO:0007669"/>
    <property type="project" value="EnsemblFungi"/>
</dbReference>
<dbReference type="CDD" id="cd01851">
    <property type="entry name" value="GBP"/>
    <property type="match status" value="1"/>
</dbReference>
<dbReference type="FunFam" id="3.40.50.300:FF:000727">
    <property type="entry name" value="Protein SEY1 homolog"/>
    <property type="match status" value="1"/>
</dbReference>
<dbReference type="Gene3D" id="3.40.50.300">
    <property type="entry name" value="P-loop containing nucleotide triphosphate hydrolases"/>
    <property type="match status" value="1"/>
</dbReference>
<dbReference type="HAMAP" id="MF_03109">
    <property type="entry name" value="Sey1"/>
    <property type="match status" value="1"/>
</dbReference>
<dbReference type="InterPro" id="IPR030386">
    <property type="entry name" value="G_GB1_RHD3_dom"/>
</dbReference>
<dbReference type="InterPro" id="IPR027417">
    <property type="entry name" value="P-loop_NTPase"/>
</dbReference>
<dbReference type="InterPro" id="IPR008803">
    <property type="entry name" value="RHD3/Sey1"/>
</dbReference>
<dbReference type="InterPro" id="IPR046758">
    <property type="entry name" value="Sey1/RHD3-like_3HB"/>
</dbReference>
<dbReference type="PANTHER" id="PTHR45923">
    <property type="entry name" value="PROTEIN SEY1"/>
    <property type="match status" value="1"/>
</dbReference>
<dbReference type="PANTHER" id="PTHR45923:SF2">
    <property type="entry name" value="PROTEIN SEY1"/>
    <property type="match status" value="1"/>
</dbReference>
<dbReference type="Pfam" id="PF05879">
    <property type="entry name" value="RHD3_GTPase"/>
    <property type="match status" value="1"/>
</dbReference>
<dbReference type="Pfam" id="PF20428">
    <property type="entry name" value="Sey1_3HB"/>
    <property type="match status" value="1"/>
</dbReference>
<dbReference type="SUPFAM" id="SSF52540">
    <property type="entry name" value="P-loop containing nucleoside triphosphate hydrolases"/>
    <property type="match status" value="1"/>
</dbReference>
<dbReference type="PROSITE" id="PS51715">
    <property type="entry name" value="G_GB1_RHD3"/>
    <property type="match status" value="1"/>
</dbReference>
<sequence>MSSGEPLSETSSSSSSFVPVDQVHLQDAIQVIDENKHFNKDILGYINKTCPPNIGHNYHIVAVFGSQSTGKSTLLNRLFNTNFDVMNEQSRQQTTKGIWLAQSPVLSTSHGHGASKSSILVMDVEGTDGRERGEDQDFERKAALFALSTSEVLILNIWETQVGLYQGANMGLLKTVFEVNLTLFGKSKLESKNNLQSKSSHKVLLLVVIRDHVGNTPVENLASTITIDLKKMWDSLLKPTELKELAFEDFFDLDFHALNHKILQPKEFTAGVGRLGDRLVVENDIFKPEYHHNIPIDGWTLYAEKCWEQIETNKDLDLPTQQILVAQFKCDEVVDTVFKEFSNKFKELFAVIEESPDYENVGALFSDLKSEVLEDYDQVAAKYNQSVYLQKRQKLDDLVNTKLKEVFDVHAKNLLQHSLTKYKKDLVALKGKDFAARSKSLSDEALELVMLNLSHISLSGAFATEILLHQFASDIKAITSQQQFIELNNIVSKAVKKLSQSLSKLMQLQLNDPTEKTWDNILYNFHQLQKEFTSKHNGDFGLNTTEAENENAFAKFKFQSWDAFYQLIHKLITKEKVLQQLQTRFDDKFRYDVNGLPKLYQNSRELEESFAVAKEHALGVLPILTIAKLSDDSEIIPDVDIFTKLLRVKYSASNRVGNYNEEGGEEEEDEDEDEDDDVALNGFADIIDEVEKAEIMAKFRKEIDAKFMETKRSIVQHVTQIPYYIYIIILLLGWNEFMAVVRNPFTFSLAIILGASLYILYTMNLLKPALTVTQRLVDEVIAVGKEKLREVLIDDHHIQAHNLDKMTGKVKVGIHEENAKEDEDATDFLKPKPTQVDVTSLNVVEEE</sequence>
<comment type="function">
    <text evidence="1">Cooperates with the reticulon proteins and tubule-shaping DP1 family proteins to generate and maintain the structure of the tubular endoplasmic reticulum network. Has GTPase activity, which is required for its function in ER organization.</text>
</comment>
<comment type="subcellular location">
    <subcellularLocation>
        <location evidence="1">Endoplasmic reticulum membrane</location>
        <topology evidence="1">Multi-pass membrane protein</topology>
    </subcellularLocation>
    <text evidence="1">Enriched in the cortical ER. Concentrated in punctae along the ER tubules.</text>
</comment>
<comment type="similarity">
    <text evidence="2">Belongs to the TRAFAC class dynamin-like GTPase superfamily. GB1/RHD3 GTPase family. RHD3 subfamily.</text>
</comment>
<protein>
    <recommendedName>
        <fullName evidence="1">Protein SEY1</fullName>
        <ecNumber evidence="1">3.6.5.-</ecNumber>
    </recommendedName>
</protein>
<evidence type="ECO:0000255" key="1">
    <source>
        <dbReference type="HAMAP-Rule" id="MF_03109"/>
    </source>
</evidence>
<evidence type="ECO:0000255" key="2">
    <source>
        <dbReference type="PROSITE-ProRule" id="PRU01052"/>
    </source>
</evidence>
<feature type="chain" id="PRO_0000384985" description="Protein SEY1">
    <location>
        <begin position="1"/>
        <end position="847"/>
    </location>
</feature>
<feature type="topological domain" description="Cytoplasmic" evidence="1">
    <location>
        <begin position="1"/>
        <end position="720"/>
    </location>
</feature>
<feature type="transmembrane region" description="Helical" evidence="1">
    <location>
        <begin position="721"/>
        <end position="741"/>
    </location>
</feature>
<feature type="topological domain" description="Lumenal" evidence="1">
    <location>
        <begin position="742"/>
        <end position="744"/>
    </location>
</feature>
<feature type="transmembrane region" description="Helical" evidence="1">
    <location>
        <begin position="745"/>
        <end position="765"/>
    </location>
</feature>
<feature type="topological domain" description="Cytoplasmic" evidence="1">
    <location>
        <begin position="766"/>
        <end position="847"/>
    </location>
</feature>
<feature type="domain" description="GB1/RHD3-type G" evidence="2">
    <location>
        <begin position="55"/>
        <end position="290"/>
    </location>
</feature>
<feature type="binding site" evidence="1">
    <location>
        <begin position="65"/>
        <end position="72"/>
    </location>
    <ligand>
        <name>GTP</name>
        <dbReference type="ChEBI" id="CHEBI:37565"/>
    </ligand>
</feature>
<reference key="1">
    <citation type="journal article" date="2009" name="Nature">
        <title>Evolution of pathogenicity and sexual reproduction in eight Candida genomes.</title>
        <authorList>
            <person name="Butler G."/>
            <person name="Rasmussen M.D."/>
            <person name="Lin M.F."/>
            <person name="Santos M.A.S."/>
            <person name="Sakthikumar S."/>
            <person name="Munro C.A."/>
            <person name="Rheinbay E."/>
            <person name="Grabherr M."/>
            <person name="Forche A."/>
            <person name="Reedy J.L."/>
            <person name="Agrafioti I."/>
            <person name="Arnaud M.B."/>
            <person name="Bates S."/>
            <person name="Brown A.J.P."/>
            <person name="Brunke S."/>
            <person name="Costanzo M.C."/>
            <person name="Fitzpatrick D.A."/>
            <person name="de Groot P.W.J."/>
            <person name="Harris D."/>
            <person name="Hoyer L.L."/>
            <person name="Hube B."/>
            <person name="Klis F.M."/>
            <person name="Kodira C."/>
            <person name="Lennard N."/>
            <person name="Logue M.E."/>
            <person name="Martin R."/>
            <person name="Neiman A.M."/>
            <person name="Nikolaou E."/>
            <person name="Quail M.A."/>
            <person name="Quinn J."/>
            <person name="Santos M.C."/>
            <person name="Schmitzberger F.F."/>
            <person name="Sherlock G."/>
            <person name="Shah P."/>
            <person name="Silverstein K.A.T."/>
            <person name="Skrzypek M.S."/>
            <person name="Soll D."/>
            <person name="Staggs R."/>
            <person name="Stansfield I."/>
            <person name="Stumpf M.P.H."/>
            <person name="Sudbery P.E."/>
            <person name="Srikantha T."/>
            <person name="Zeng Q."/>
            <person name="Berman J."/>
            <person name="Berriman M."/>
            <person name="Heitman J."/>
            <person name="Gow N.A.R."/>
            <person name="Lorenz M.C."/>
            <person name="Birren B.W."/>
            <person name="Kellis M."/>
            <person name="Cuomo C.A."/>
        </authorList>
    </citation>
    <scope>NUCLEOTIDE SEQUENCE [LARGE SCALE GENOMIC DNA]</scope>
    <source>
        <strain>ATCC 11503 / BCRC 21390 / CBS 2605 / JCM 1781 / NBRC 1676 / NRRL YB-4239</strain>
    </source>
</reference>
<name>SEY1_LODEL</name>
<organism>
    <name type="scientific">Lodderomyces elongisporus (strain ATCC 11503 / CBS 2605 / JCM 1781 / NBRC 1676 / NRRL YB-4239)</name>
    <name type="common">Yeast</name>
    <name type="synonym">Saccharomyces elongisporus</name>
    <dbReference type="NCBI Taxonomy" id="379508"/>
    <lineage>
        <taxon>Eukaryota</taxon>
        <taxon>Fungi</taxon>
        <taxon>Dikarya</taxon>
        <taxon>Ascomycota</taxon>
        <taxon>Saccharomycotina</taxon>
        <taxon>Pichiomycetes</taxon>
        <taxon>Debaryomycetaceae</taxon>
        <taxon>Candida/Lodderomyces clade</taxon>
        <taxon>Lodderomyces</taxon>
    </lineage>
</organism>
<proteinExistence type="inferred from homology"/>
<gene>
    <name evidence="1" type="primary">SEY1</name>
    <name type="ORF">LELG_03677</name>
</gene>